<dbReference type="EMBL" id="AEHH01000023">
    <property type="protein sequence ID" value="EGA58778.1"/>
    <property type="molecule type" value="Genomic_DNA"/>
</dbReference>
<dbReference type="HOGENOM" id="CLU_099155_0_0_1"/>
<dbReference type="OrthoDB" id="4089816at2759"/>
<dbReference type="GO" id="GO:0031083">
    <property type="term" value="C:BLOC-1 complex"/>
    <property type="evidence" value="ECO:0007669"/>
    <property type="project" value="TreeGrafter"/>
</dbReference>
<dbReference type="GO" id="GO:0005768">
    <property type="term" value="C:endosome"/>
    <property type="evidence" value="ECO:0007669"/>
    <property type="project" value="UniProtKB-SubCell"/>
</dbReference>
<dbReference type="GO" id="GO:0007032">
    <property type="term" value="P:endosome organization"/>
    <property type="evidence" value="ECO:0007669"/>
    <property type="project" value="TreeGrafter"/>
</dbReference>
<dbReference type="GO" id="GO:0032880">
    <property type="term" value="P:regulation of protein localization"/>
    <property type="evidence" value="ECO:0007669"/>
    <property type="project" value="TreeGrafter"/>
</dbReference>
<dbReference type="InterPro" id="IPR051390">
    <property type="entry name" value="BLOC-1_subunit_KXD1"/>
</dbReference>
<dbReference type="InterPro" id="IPR019371">
    <property type="entry name" value="KxDL_dom"/>
</dbReference>
<dbReference type="PANTHER" id="PTHR37787">
    <property type="entry name" value="BIOGENESIS OF LYSOSOME-RELATED ORGANELLES COMPLEX 1 SUBUNIT KXD1"/>
    <property type="match status" value="1"/>
</dbReference>
<dbReference type="PANTHER" id="PTHR37787:SF1">
    <property type="entry name" value="BIOGENESIS OF LYSOSOME-RELATED ORGANELLES COMPLEX 1 SUBUNIT KXD1"/>
    <property type="match status" value="1"/>
</dbReference>
<dbReference type="Pfam" id="PF10241">
    <property type="entry name" value="KxDL"/>
    <property type="match status" value="1"/>
</dbReference>
<proteinExistence type="inferred from homology"/>
<accession>E7Q3U6</accession>
<gene>
    <name type="primary">KXD1</name>
    <name type="ORF">FOSTERSB_1693</name>
</gene>
<protein>
    <recommendedName>
        <fullName>Biogenesis of lysosome-related organelles complex 1 subunit KXD1</fullName>
        <shortName>BLOC-1 subunit KXD1</shortName>
    </recommendedName>
    <alternativeName>
        <fullName>KxDL homolog</fullName>
    </alternativeName>
</protein>
<sequence length="218" mass="24442">MVTGISEENDDEETFSAVHSSTPSINSQSYAIPITEEMSSSFHDSISTTSNSSGSFDSDGSNVSBVVEQNEMDNESNVDEDLFLDNDIPQSSNLLPTDAQDPGPIFDVSRYIFDSLKQSIDSADFSEALSLQTKTSAVINSKSLELKQYIDEMKSRLTQLQEKFENGEATSKKIKRDLETSRKNIDYLNAALRVDFPIEFNQAREKILERRLNEDHDC</sequence>
<comment type="function">
    <text evidence="1">Component of the biogenesis of lysosome-related organelles complex-1 (BLOC-1) involved in endosomal cargo sorting.</text>
</comment>
<comment type="subunit">
    <text evidence="1">Component of the biogenesis of lysosome-related organelles complex-1 (BLOC-1) composed of at least BLI1, BLS1, CNL1, KXD1, SNN1 and VAB2.</text>
</comment>
<comment type="subcellular location">
    <subcellularLocation>
        <location evidence="1">Endosome</location>
    </subcellularLocation>
</comment>
<comment type="similarity">
    <text evidence="4">Belongs to the KXD1 family.</text>
</comment>
<evidence type="ECO:0000250" key="1"/>
<evidence type="ECO:0000255" key="2"/>
<evidence type="ECO:0000256" key="3">
    <source>
        <dbReference type="SAM" id="MobiDB-lite"/>
    </source>
</evidence>
<evidence type="ECO:0000305" key="4"/>
<name>KXD1_YEASB</name>
<feature type="chain" id="PRO_0000410675" description="Biogenesis of lysosome-related organelles complex 1 subunit KXD1">
    <location>
        <begin position="1"/>
        <end position="218"/>
    </location>
</feature>
<feature type="region of interest" description="Disordered" evidence="3">
    <location>
        <begin position="1"/>
        <end position="62"/>
    </location>
</feature>
<feature type="coiled-coil region" evidence="2">
    <location>
        <begin position="142"/>
        <end position="192"/>
    </location>
</feature>
<feature type="compositionally biased region" description="Polar residues" evidence="3">
    <location>
        <begin position="17"/>
        <end position="30"/>
    </location>
</feature>
<feature type="compositionally biased region" description="Low complexity" evidence="3">
    <location>
        <begin position="39"/>
        <end position="62"/>
    </location>
</feature>
<keyword id="KW-0175">Coiled coil</keyword>
<keyword id="KW-0967">Endosome</keyword>
<keyword id="KW-0813">Transport</keyword>
<reference key="1">
    <citation type="journal article" date="2011" name="PLoS Genet.">
        <title>Whole-genome comparison reveals novel genetic elements that characterize the genome of industrial strains of Saccharomyces cerevisiae.</title>
        <authorList>
            <person name="Borneman A.R."/>
            <person name="Desany B.A."/>
            <person name="Riches D."/>
            <person name="Affourtit J.P."/>
            <person name="Forgan A.H."/>
            <person name="Pretorius I.S."/>
            <person name="Egholm M."/>
            <person name="Chambers P.J."/>
        </authorList>
    </citation>
    <scope>NUCLEOTIDE SEQUENCE [LARGE SCALE GENOMIC DNA]</scope>
    <source>
        <strain>FostersB</strain>
    </source>
</reference>
<organism>
    <name type="scientific">Saccharomyces cerevisiae (strain FostersB)</name>
    <name type="common">Baker's yeast</name>
    <dbReference type="NCBI Taxonomy" id="764102"/>
    <lineage>
        <taxon>Eukaryota</taxon>
        <taxon>Fungi</taxon>
        <taxon>Dikarya</taxon>
        <taxon>Ascomycota</taxon>
        <taxon>Saccharomycotina</taxon>
        <taxon>Saccharomycetes</taxon>
        <taxon>Saccharomycetales</taxon>
        <taxon>Saccharomycetaceae</taxon>
        <taxon>Saccharomyces</taxon>
    </lineage>
</organism>